<keyword id="KW-1003">Cell membrane</keyword>
<keyword id="KW-0472">Membrane</keyword>
<keyword id="KW-1185">Reference proteome</keyword>
<keyword id="KW-0808">Transferase</keyword>
<keyword id="KW-0812">Transmembrane</keyword>
<keyword id="KW-1133">Transmembrane helix</keyword>
<feature type="chain" id="PRO_0000172686" description="Phosphatidylglycerol--prolipoprotein diacylglyceryl transferase 2">
    <location>
        <begin position="1"/>
        <end position="317"/>
    </location>
</feature>
<feature type="transmembrane region" description="Helical" evidence="1">
    <location>
        <begin position="19"/>
        <end position="39"/>
    </location>
</feature>
<feature type="transmembrane region" description="Helical" evidence="1">
    <location>
        <begin position="51"/>
        <end position="71"/>
    </location>
</feature>
<feature type="transmembrane region" description="Helical" evidence="1">
    <location>
        <begin position="93"/>
        <end position="113"/>
    </location>
</feature>
<feature type="transmembrane region" description="Helical" evidence="1">
    <location>
        <begin position="120"/>
        <end position="140"/>
    </location>
</feature>
<feature type="transmembrane region" description="Helical" evidence="1">
    <location>
        <begin position="180"/>
        <end position="200"/>
    </location>
</feature>
<feature type="transmembrane region" description="Helical" evidence="1">
    <location>
        <begin position="211"/>
        <end position="230"/>
    </location>
</feature>
<feature type="transmembrane region" description="Helical" evidence="1">
    <location>
        <begin position="241"/>
        <end position="261"/>
    </location>
</feature>
<feature type="region of interest" description="Disordered" evidence="2">
    <location>
        <begin position="275"/>
        <end position="317"/>
    </location>
</feature>
<feature type="compositionally biased region" description="Polar residues" evidence="2">
    <location>
        <begin position="299"/>
        <end position="317"/>
    </location>
</feature>
<feature type="binding site" evidence="1">
    <location>
        <position position="141"/>
    </location>
    <ligand>
        <name>a 1,2-diacyl-sn-glycero-3-phospho-(1'-sn-glycerol)</name>
        <dbReference type="ChEBI" id="CHEBI:64716"/>
    </ligand>
</feature>
<dbReference type="EC" id="2.5.1.145" evidence="1"/>
<dbReference type="EMBL" id="AL939132">
    <property type="protein sequence ID" value="CAC03640.1"/>
    <property type="molecule type" value="Genomic_DNA"/>
</dbReference>
<dbReference type="RefSeq" id="NP_631850.1">
    <property type="nucleotide sequence ID" value="NC_003888.3"/>
</dbReference>
<dbReference type="SMR" id="Q9FBW3"/>
<dbReference type="FunCoup" id="Q9FBW3">
    <property type="interactions" value="15"/>
</dbReference>
<dbReference type="STRING" id="100226.gene:17765482"/>
<dbReference type="PaxDb" id="100226-SCO7822"/>
<dbReference type="KEGG" id="sco:SCO7822"/>
<dbReference type="PATRIC" id="fig|100226.15.peg.7932"/>
<dbReference type="eggNOG" id="COG0682">
    <property type="taxonomic scope" value="Bacteria"/>
</dbReference>
<dbReference type="HOGENOM" id="CLU_013386_2_0_11"/>
<dbReference type="InParanoid" id="Q9FBW3"/>
<dbReference type="OrthoDB" id="871140at2"/>
<dbReference type="PhylomeDB" id="Q9FBW3"/>
<dbReference type="UniPathway" id="UPA00664"/>
<dbReference type="Proteomes" id="UP000001973">
    <property type="component" value="Chromosome"/>
</dbReference>
<dbReference type="GO" id="GO:0005886">
    <property type="term" value="C:plasma membrane"/>
    <property type="evidence" value="ECO:0000318"/>
    <property type="project" value="GO_Central"/>
</dbReference>
<dbReference type="GO" id="GO:0008961">
    <property type="term" value="F:phosphatidylglycerol-prolipoprotein diacylglyceryl transferase activity"/>
    <property type="evidence" value="ECO:0000318"/>
    <property type="project" value="GO_Central"/>
</dbReference>
<dbReference type="GO" id="GO:0042158">
    <property type="term" value="P:lipoprotein biosynthetic process"/>
    <property type="evidence" value="ECO:0000318"/>
    <property type="project" value="GO_Central"/>
</dbReference>
<dbReference type="HAMAP" id="MF_01147">
    <property type="entry name" value="Lgt"/>
    <property type="match status" value="1"/>
</dbReference>
<dbReference type="InterPro" id="IPR001640">
    <property type="entry name" value="Lgt"/>
</dbReference>
<dbReference type="NCBIfam" id="TIGR00544">
    <property type="entry name" value="lgt"/>
    <property type="match status" value="1"/>
</dbReference>
<dbReference type="PANTHER" id="PTHR30589:SF0">
    <property type="entry name" value="PHOSPHATIDYLGLYCEROL--PROLIPOPROTEIN DIACYLGLYCERYL TRANSFERASE"/>
    <property type="match status" value="1"/>
</dbReference>
<dbReference type="PANTHER" id="PTHR30589">
    <property type="entry name" value="PROLIPOPROTEIN DIACYLGLYCERYL TRANSFERASE"/>
    <property type="match status" value="1"/>
</dbReference>
<dbReference type="Pfam" id="PF01790">
    <property type="entry name" value="LGT"/>
    <property type="match status" value="1"/>
</dbReference>
<dbReference type="PROSITE" id="PS01311">
    <property type="entry name" value="LGT"/>
    <property type="match status" value="1"/>
</dbReference>
<comment type="function">
    <text evidence="1">Catalyzes the transfer of the diacylglyceryl group from phosphatidylglycerol to the sulfhydryl group of the N-terminal cysteine of a prolipoprotein, the first step in the formation of mature lipoproteins.</text>
</comment>
<comment type="catalytic activity">
    <reaction evidence="1">
        <text>L-cysteinyl-[prolipoprotein] + a 1,2-diacyl-sn-glycero-3-phospho-(1'-sn-glycerol) = an S-1,2-diacyl-sn-glyceryl-L-cysteinyl-[prolipoprotein] + sn-glycerol 1-phosphate + H(+)</text>
        <dbReference type="Rhea" id="RHEA:56712"/>
        <dbReference type="Rhea" id="RHEA-COMP:14679"/>
        <dbReference type="Rhea" id="RHEA-COMP:14680"/>
        <dbReference type="ChEBI" id="CHEBI:15378"/>
        <dbReference type="ChEBI" id="CHEBI:29950"/>
        <dbReference type="ChEBI" id="CHEBI:57685"/>
        <dbReference type="ChEBI" id="CHEBI:64716"/>
        <dbReference type="ChEBI" id="CHEBI:140658"/>
        <dbReference type="EC" id="2.5.1.145"/>
    </reaction>
</comment>
<comment type="pathway">
    <text evidence="1">Protein modification; lipoprotein biosynthesis (diacylglyceryl transfer).</text>
</comment>
<comment type="subcellular location">
    <subcellularLocation>
        <location evidence="1">Cell membrane</location>
        <topology evidence="1">Multi-pass membrane protein</topology>
    </subcellularLocation>
</comment>
<comment type="similarity">
    <text evidence="1">Belongs to the Lgt family.</text>
</comment>
<accession>Q9FBW3</accession>
<organism>
    <name type="scientific">Streptomyces coelicolor (strain ATCC BAA-471 / A3(2) / M145)</name>
    <dbReference type="NCBI Taxonomy" id="100226"/>
    <lineage>
        <taxon>Bacteria</taxon>
        <taxon>Bacillati</taxon>
        <taxon>Actinomycetota</taxon>
        <taxon>Actinomycetes</taxon>
        <taxon>Kitasatosporales</taxon>
        <taxon>Streptomycetaceae</taxon>
        <taxon>Streptomyces</taxon>
        <taxon>Streptomyces albidoflavus group</taxon>
    </lineage>
</organism>
<evidence type="ECO:0000255" key="1">
    <source>
        <dbReference type="HAMAP-Rule" id="MF_01147"/>
    </source>
</evidence>
<evidence type="ECO:0000256" key="2">
    <source>
        <dbReference type="SAM" id="MobiDB-lite"/>
    </source>
</evidence>
<name>LGT2_STRCO</name>
<protein>
    <recommendedName>
        <fullName evidence="1">Phosphatidylglycerol--prolipoprotein diacylglyceryl transferase 2</fullName>
        <ecNumber evidence="1">2.5.1.145</ecNumber>
    </recommendedName>
</protein>
<gene>
    <name evidence="1" type="primary">lgt2</name>
    <name type="ordered locus">SCO7822</name>
    <name type="ORF">SC8E7.19c</name>
</gene>
<proteinExistence type="inferred from homology"/>
<sequence>MDLAYLPSPSTGVLHLGPIPLRAYAFCIILGVFAAVWLGNRRWVARGGKQGVIADVTLWAVPFGLVGGRLYHVFTSPDAYFGERGEPVRALYVWEGGLGIWGAIALGAVGAWIGCRRHRIPLPAFADAVAPGIVLAQAIGRWGNWFNQELYGRPTTLPWGLEIDRAHRPAGTLDIATYHPTFLYESLWNIGVAALILWAAKRFPLGHGRTFALYVAAYTVGRFGTEYLRIDEAHTFLGLRLNNWTSVLVFLGAVACLVVSAHRHPGIENVARLQGAGADGRTDDPRPADASVGLASGPPGNSTPRRATESWNVRNRS</sequence>
<reference key="1">
    <citation type="journal article" date="2002" name="Nature">
        <title>Complete genome sequence of the model actinomycete Streptomyces coelicolor A3(2).</title>
        <authorList>
            <person name="Bentley S.D."/>
            <person name="Chater K.F."/>
            <person name="Cerdeno-Tarraga A.-M."/>
            <person name="Challis G.L."/>
            <person name="Thomson N.R."/>
            <person name="James K.D."/>
            <person name="Harris D.E."/>
            <person name="Quail M.A."/>
            <person name="Kieser H."/>
            <person name="Harper D."/>
            <person name="Bateman A."/>
            <person name="Brown S."/>
            <person name="Chandra G."/>
            <person name="Chen C.W."/>
            <person name="Collins M."/>
            <person name="Cronin A."/>
            <person name="Fraser A."/>
            <person name="Goble A."/>
            <person name="Hidalgo J."/>
            <person name="Hornsby T."/>
            <person name="Howarth S."/>
            <person name="Huang C.-H."/>
            <person name="Kieser T."/>
            <person name="Larke L."/>
            <person name="Murphy L.D."/>
            <person name="Oliver K."/>
            <person name="O'Neil S."/>
            <person name="Rabbinowitsch E."/>
            <person name="Rajandream M.A."/>
            <person name="Rutherford K.M."/>
            <person name="Rutter S."/>
            <person name="Seeger K."/>
            <person name="Saunders D."/>
            <person name="Sharp S."/>
            <person name="Squares R."/>
            <person name="Squares S."/>
            <person name="Taylor K."/>
            <person name="Warren T."/>
            <person name="Wietzorrek A."/>
            <person name="Woodward J.R."/>
            <person name="Barrell B.G."/>
            <person name="Parkhill J."/>
            <person name="Hopwood D.A."/>
        </authorList>
    </citation>
    <scope>NUCLEOTIDE SEQUENCE [LARGE SCALE GENOMIC DNA]</scope>
    <source>
        <strain>ATCC BAA-471 / A3(2) / M145</strain>
    </source>
</reference>